<comment type="catalytic activity">
    <reaction>
        <text>[RNA] containing guanosine + H2O = an [RNA fragment]-3'-guanosine-3'-phosphate + a 5'-hydroxy-ribonucleotide-3'-[RNA fragment].</text>
        <dbReference type="EC" id="4.6.1.24"/>
    </reaction>
</comment>
<comment type="similarity">
    <text evidence="3">Belongs to the ribonuclease N1/T1 family.</text>
</comment>
<feature type="chain" id="PRO_0000137376" description="Guanyl-specific ribonuclease U1">
    <location>
        <begin position="1"/>
        <end position="105"/>
    </location>
</feature>
<feature type="active site" evidence="1">
    <location>
        <position position="37"/>
    </location>
</feature>
<feature type="active site" description="Proton acceptor" evidence="1">
    <location>
        <position position="57"/>
    </location>
</feature>
<feature type="active site" description="Proton donor" evidence="1">
    <location>
        <position position="92"/>
    </location>
</feature>
<feature type="modified residue" description="Pyrrolidone carboxylic acid" evidence="2">
    <location>
        <position position="1"/>
    </location>
</feature>
<feature type="disulfide bond" evidence="2">
    <location>
        <begin position="8"/>
        <end position="103"/>
    </location>
</feature>
<feature type="disulfide bond" evidence="2">
    <location>
        <begin position="51"/>
        <end position="87"/>
    </location>
</feature>
<keyword id="KW-0903">Direct protein sequencing</keyword>
<keyword id="KW-1015">Disulfide bond</keyword>
<keyword id="KW-0255">Endonuclease</keyword>
<keyword id="KW-0378">Hydrolase</keyword>
<keyword id="KW-0456">Lyase</keyword>
<keyword id="KW-0540">Nuclease</keyword>
<keyword id="KW-0873">Pyrrolidone carboxylic acid</keyword>
<dbReference type="EC" id="4.6.1.24"/>
<dbReference type="PIR" id="A41445">
    <property type="entry name" value="A41445"/>
</dbReference>
<dbReference type="SMR" id="P07736"/>
<dbReference type="GO" id="GO:0016829">
    <property type="term" value="F:lyase activity"/>
    <property type="evidence" value="ECO:0007669"/>
    <property type="project" value="UniProtKB-KW"/>
</dbReference>
<dbReference type="GO" id="GO:0046589">
    <property type="term" value="F:ribonuclease T1 activity"/>
    <property type="evidence" value="ECO:0007669"/>
    <property type="project" value="UniProtKB-EC"/>
</dbReference>
<dbReference type="GO" id="GO:0003723">
    <property type="term" value="F:RNA binding"/>
    <property type="evidence" value="ECO:0007669"/>
    <property type="project" value="InterPro"/>
</dbReference>
<dbReference type="GO" id="GO:0004521">
    <property type="term" value="F:RNA endonuclease activity"/>
    <property type="evidence" value="ECO:0007669"/>
    <property type="project" value="InterPro"/>
</dbReference>
<dbReference type="CDD" id="cd00606">
    <property type="entry name" value="fungal_RNase"/>
    <property type="match status" value="1"/>
</dbReference>
<dbReference type="Gene3D" id="3.10.450.30">
    <property type="entry name" value="Microbial ribonucleases"/>
    <property type="match status" value="1"/>
</dbReference>
<dbReference type="InterPro" id="IPR000026">
    <property type="entry name" value="N1-like"/>
</dbReference>
<dbReference type="InterPro" id="IPR016191">
    <property type="entry name" value="Ribonuclease/ribotoxin"/>
</dbReference>
<dbReference type="InterPro" id="IPR051386">
    <property type="entry name" value="Ribonuclease_N1/T1"/>
</dbReference>
<dbReference type="PANTHER" id="PTHR42104">
    <property type="entry name" value="EXTRACELLULAR GUANYL-SPECIFIC RIBONUCLEASE RNTA (AFU_ORTHOLOGUE AFUA_4G03230)"/>
    <property type="match status" value="1"/>
</dbReference>
<dbReference type="PANTHER" id="PTHR42104:SF1">
    <property type="entry name" value="EXTRACELLULAR GUANYL-SPECIFIC RIBONUCLEASE RNTA (AFU_ORTHOLOGUE AFUA_4G03230)"/>
    <property type="match status" value="1"/>
</dbReference>
<dbReference type="Pfam" id="PF00545">
    <property type="entry name" value="Ribonuclease"/>
    <property type="match status" value="1"/>
</dbReference>
<dbReference type="SUPFAM" id="SSF53933">
    <property type="entry name" value="Microbial ribonucleases"/>
    <property type="match status" value="1"/>
</dbReference>
<evidence type="ECO:0000250" key="1"/>
<evidence type="ECO:0000269" key="2">
    <source>
    </source>
</evidence>
<evidence type="ECO:0000305" key="3"/>
<sequence>QGGVSVNCGGTYYSSTQVNRAINNAKSGQYSSTGYPHTYNNYEGFDFSDYCDGPYKEYPLKTSSSGYTGGSPGADRVVYDSNDGTFCGAITHTGASGNNFVQCSY</sequence>
<protein>
    <recommendedName>
        <fullName>Guanyl-specific ribonuclease U1</fullName>
        <shortName>RNase U1</shortName>
        <ecNumber>4.6.1.24</ecNumber>
    </recommendedName>
</protein>
<name>RNU1_USTSP</name>
<organism>
    <name type="scientific">Ustilago sphaerogena</name>
    <name type="common">Smut fungus</name>
    <dbReference type="NCBI Taxonomy" id="5271"/>
    <lineage>
        <taxon>Eukaryota</taxon>
        <taxon>Fungi</taxon>
        <taxon>Dikarya</taxon>
        <taxon>Basidiomycota</taxon>
        <taxon>Ustilaginomycotina</taxon>
        <taxon>Ustilaginomycetes</taxon>
        <taxon>Ustilaginales</taxon>
        <taxon>Ustilaginaceae</taxon>
        <taxon>Ustilago</taxon>
    </lineage>
</organism>
<accession>P07736</accession>
<proteinExistence type="evidence at protein level"/>
<reference key="1">
    <citation type="journal article" date="1988" name="J. Biochem.">
        <title>The amino acid sequence of ribonuclease U1, a guanine-specific ribonuclease from the fungus Ustilago sphaerogena.</title>
        <authorList>
            <person name="Takahashi K."/>
            <person name="Hashimoto J."/>
        </authorList>
    </citation>
    <scope>PROTEIN SEQUENCE</scope>
    <scope>PYROGLUTAMATE FORMATION AT GLN-1</scope>
</reference>